<proteinExistence type="evidence at protein level"/>
<keyword id="KW-0903">Direct protein sequencing</keyword>
<keyword id="KW-0527">Neuropeptide</keyword>
<keyword id="KW-0964">Secreted</keyword>
<comment type="function">
    <text evidence="1">Has myotropic activity targeting the genital tract.</text>
</comment>
<comment type="subcellular location">
    <subcellularLocation>
        <location evidence="1">Secreted</location>
    </subcellularLocation>
</comment>
<comment type="tissue specificity">
    <text evidence="1">Vitellogenic follicle, fully grown oocyte, egg and internal egg-capsule (at protein level). Not detected in previtellogenic follicles, external egg-capsule, central nervous system and hemolymph.</text>
</comment>
<comment type="mass spectrometry">
    <molecule>Ovarian jelly-peptide 2</molecule>
</comment>
<dbReference type="GO" id="GO:0005576">
    <property type="term" value="C:extracellular region"/>
    <property type="evidence" value="ECO:0000314"/>
    <property type="project" value="UniProtKB"/>
</dbReference>
<dbReference type="GO" id="GO:0007218">
    <property type="term" value="P:neuropeptide signaling pathway"/>
    <property type="evidence" value="ECO:0007669"/>
    <property type="project" value="UniProtKB-KW"/>
</dbReference>
<dbReference type="GO" id="GO:0006937">
    <property type="term" value="P:regulation of muscle contraction"/>
    <property type="evidence" value="ECO:0000314"/>
    <property type="project" value="UniProtKB"/>
</dbReference>
<dbReference type="GO" id="GO:0019953">
    <property type="term" value="P:sexual reproduction"/>
    <property type="evidence" value="ECO:0000270"/>
    <property type="project" value="UniProtKB"/>
</dbReference>
<protein>
    <recommendedName>
        <fullName>Ovarian jelly-peptide 3</fullName>
        <shortName>OJP3</shortName>
    </recommendedName>
    <component>
        <recommendedName>
            <fullName>Ovarian jelly-peptide 2</fullName>
            <shortName>OJP2</shortName>
        </recommendedName>
    </component>
</protein>
<sequence>DEVKIVLD</sequence>
<accession>P85069</accession>
<accession>P85068</accession>
<evidence type="ECO:0000269" key="1">
    <source>
    </source>
</evidence>
<evidence type="ECO:0000305" key="2"/>
<organism>
    <name type="scientific">Sepia officinalis</name>
    <name type="common">Common cuttlefish</name>
    <dbReference type="NCBI Taxonomy" id="6610"/>
    <lineage>
        <taxon>Eukaryota</taxon>
        <taxon>Metazoa</taxon>
        <taxon>Spiralia</taxon>
        <taxon>Lophotrochozoa</taxon>
        <taxon>Mollusca</taxon>
        <taxon>Cephalopoda</taxon>
        <taxon>Coleoidea</taxon>
        <taxon>Decapodiformes</taxon>
        <taxon>Sepiida</taxon>
        <taxon>Sepiina</taxon>
        <taxon>Sepiidae</taxon>
        <taxon>Sepia</taxon>
    </lineage>
</organism>
<name>OJP3_SEPOF</name>
<reference evidence="2" key="1">
    <citation type="journal article" date="2006" name="Peptides">
        <title>Ovarian jelly-peptides (OJPs), a new family of regulatory peptides identified in the cephalopod Sepia officinalis.</title>
        <authorList>
            <person name="Bernay B."/>
            <person name="Baudy-Floc'h M."/>
            <person name="Gagnon J."/>
            <person name="Henry J."/>
        </authorList>
    </citation>
    <scope>PROTEIN SEQUENCE</scope>
    <scope>FUNCTION</scope>
    <scope>SUBCELLULAR LOCATION</scope>
    <scope>TISSUE SPECIFICITY</scope>
    <scope>MASS SPECTROMETRY</scope>
    <source>
        <tissue evidence="1">Oocyte</tissue>
    </source>
</reference>
<feature type="peptide" id="PRO_0000273267" description="Ovarian jelly-peptide 3" evidence="1">
    <location>
        <begin position="1"/>
        <end position="8"/>
    </location>
</feature>
<feature type="peptide" id="PRO_0000273266" description="Ovarian jelly-peptide 2">
    <location>
        <begin position="1"/>
        <end position="7"/>
    </location>
</feature>